<keyword id="KW-0472">Membrane</keyword>
<keyword id="KW-1185">Reference proteome</keyword>
<keyword id="KW-0812">Transmembrane</keyword>
<keyword id="KW-1133">Transmembrane helix</keyword>
<evidence type="ECO:0000255" key="1"/>
<evidence type="ECO:0000255" key="2">
    <source>
        <dbReference type="PROSITE-ProRule" id="PRU00205"/>
    </source>
</evidence>
<evidence type="ECO:0000305" key="3"/>
<comment type="subcellular location">
    <subcellularLocation>
        <location evidence="3">Membrane</location>
        <topology evidence="3">Multi-pass membrane protein</topology>
    </subcellularLocation>
</comment>
<comment type="similarity">
    <text evidence="3">Belongs to the TLCD4 family.</text>
</comment>
<feature type="chain" id="PRO_0000286706" description="TLC domain-containing protein 4">
    <location>
        <begin position="1"/>
        <end position="259"/>
    </location>
</feature>
<feature type="transmembrane region" description="Helical" evidence="1">
    <location>
        <begin position="6"/>
        <end position="26"/>
    </location>
</feature>
<feature type="transmembrane region" description="Helical" evidence="1">
    <location>
        <begin position="53"/>
        <end position="73"/>
    </location>
</feature>
<feature type="transmembrane region" description="Helical" evidence="1">
    <location>
        <begin position="86"/>
        <end position="106"/>
    </location>
</feature>
<feature type="transmembrane region" description="Helical" evidence="1">
    <location>
        <begin position="117"/>
        <end position="133"/>
    </location>
</feature>
<feature type="transmembrane region" description="Helical" evidence="1">
    <location>
        <begin position="172"/>
        <end position="192"/>
    </location>
</feature>
<feature type="transmembrane region" description="Helical" evidence="1">
    <location>
        <begin position="213"/>
        <end position="233"/>
    </location>
</feature>
<feature type="domain" description="TLC" evidence="2">
    <location>
        <begin position="44"/>
        <end position="246"/>
    </location>
</feature>
<protein>
    <recommendedName>
        <fullName>TLC domain-containing protein 4</fullName>
    </recommendedName>
    <alternativeName>
        <fullName>Transmembrane protein 56</fullName>
    </alternativeName>
</protein>
<name>TLCD4_XENTR</name>
<gene>
    <name type="primary">tlcd4</name>
    <name type="synonym">tmem56</name>
</gene>
<reference key="1">
    <citation type="submission" date="2003-12" db="EMBL/GenBank/DDBJ databases">
        <authorList>
            <consortium name="NIH - Xenopus Gene Collection (XGC) project"/>
        </authorList>
    </citation>
    <scope>NUCLEOTIDE SEQUENCE [LARGE SCALE MRNA]</scope>
    <source>
        <tissue>Tadpole</tissue>
    </source>
</reference>
<proteinExistence type="evidence at transcript level"/>
<dbReference type="EMBL" id="BC063336">
    <property type="protein sequence ID" value="AAH63336.1"/>
    <property type="molecule type" value="mRNA"/>
</dbReference>
<dbReference type="STRING" id="8364.ENSXETP00000040288"/>
<dbReference type="PaxDb" id="8364-ENSXETP00000036495"/>
<dbReference type="DNASU" id="394789"/>
<dbReference type="KEGG" id="xtr:394789"/>
<dbReference type="AGR" id="Xenbase:XB-GENE-5756243"/>
<dbReference type="CTD" id="394789"/>
<dbReference type="Xenbase" id="XB-GENE-5756243">
    <property type="gene designation" value="tlcd4.2"/>
</dbReference>
<dbReference type="eggNOG" id="KOG4561">
    <property type="taxonomic scope" value="Eukaryota"/>
</dbReference>
<dbReference type="HOGENOM" id="CLU_034597_2_0_1"/>
<dbReference type="InParanoid" id="Q6P4N1"/>
<dbReference type="OMA" id="HANNHTD"/>
<dbReference type="OrthoDB" id="10266980at2759"/>
<dbReference type="PhylomeDB" id="Q6P4N1"/>
<dbReference type="TreeFam" id="TF324847"/>
<dbReference type="Proteomes" id="UP000008143">
    <property type="component" value="Chromosome 3"/>
</dbReference>
<dbReference type="Bgee" id="ENSXETG00000016736">
    <property type="expression patterns" value="Expressed in liver and 11 other cell types or tissues"/>
</dbReference>
<dbReference type="GO" id="GO:0016020">
    <property type="term" value="C:membrane"/>
    <property type="evidence" value="ECO:0007669"/>
    <property type="project" value="UniProtKB-SubCell"/>
</dbReference>
<dbReference type="InterPro" id="IPR006634">
    <property type="entry name" value="TLC-dom"/>
</dbReference>
<dbReference type="InterPro" id="IPR050846">
    <property type="entry name" value="TLCD"/>
</dbReference>
<dbReference type="PANTHER" id="PTHR13439">
    <property type="entry name" value="CT120 PROTEIN"/>
    <property type="match status" value="1"/>
</dbReference>
<dbReference type="PANTHER" id="PTHR13439:SF49">
    <property type="entry name" value="TLC DOMAIN-CONTAINING PROTEIN 4-B"/>
    <property type="match status" value="1"/>
</dbReference>
<dbReference type="Pfam" id="PF03798">
    <property type="entry name" value="TRAM_LAG1_CLN8"/>
    <property type="match status" value="1"/>
</dbReference>
<dbReference type="SMART" id="SM00724">
    <property type="entry name" value="TLC"/>
    <property type="match status" value="1"/>
</dbReference>
<dbReference type="PROSITE" id="PS50922">
    <property type="entry name" value="TLC"/>
    <property type="match status" value="1"/>
</dbReference>
<sequence>MDDSVFISYCVVTGSFLGFQLLFSIISPRTFTKYSSTYRQLSFGKQCEWDSRCVSTTHALVVGSGCLYILAYDEAVNADPIWGDPFWVKMNVAITCGYLVHDLLLLARFWKVMRDPYMVCHHLAVFYSYGYVLNRGVLPYFANFRLISELSTPFVNQRWFFDVIGKPRSSWPVLLNGLAMALVFFIVRIAVIPSYYSQVFATFGTEGYIRLGIGPQVAWIVSCVVLDILNVFWMYKIARGFYKVVKAKPDGKPRRNHAD</sequence>
<organism>
    <name type="scientific">Xenopus tropicalis</name>
    <name type="common">Western clawed frog</name>
    <name type="synonym">Silurana tropicalis</name>
    <dbReference type="NCBI Taxonomy" id="8364"/>
    <lineage>
        <taxon>Eukaryota</taxon>
        <taxon>Metazoa</taxon>
        <taxon>Chordata</taxon>
        <taxon>Craniata</taxon>
        <taxon>Vertebrata</taxon>
        <taxon>Euteleostomi</taxon>
        <taxon>Amphibia</taxon>
        <taxon>Batrachia</taxon>
        <taxon>Anura</taxon>
        <taxon>Pipoidea</taxon>
        <taxon>Pipidae</taxon>
        <taxon>Xenopodinae</taxon>
        <taxon>Xenopus</taxon>
        <taxon>Silurana</taxon>
    </lineage>
</organism>
<accession>Q6P4N1</accession>